<protein>
    <recommendedName>
        <fullName evidence="1">Triosephosphate isomerase</fullName>
        <shortName evidence="1">TIM</shortName>
        <shortName evidence="1">TPI</shortName>
        <ecNumber evidence="1">5.3.1.1</ecNumber>
    </recommendedName>
    <alternativeName>
        <fullName evidence="1">Triose-phosphate isomerase</fullName>
    </alternativeName>
</protein>
<gene>
    <name evidence="1" type="primary">tpiA</name>
    <name type="ordered locus">PPA0818</name>
</gene>
<evidence type="ECO:0000255" key="1">
    <source>
        <dbReference type="HAMAP-Rule" id="MF_00147"/>
    </source>
</evidence>
<keyword id="KW-0963">Cytoplasm</keyword>
<keyword id="KW-0312">Gluconeogenesis</keyword>
<keyword id="KW-0324">Glycolysis</keyword>
<keyword id="KW-0413">Isomerase</keyword>
<reference key="1">
    <citation type="journal article" date="2004" name="Science">
        <title>The complete genome sequence of Propionibacterium acnes, a commensal of human skin.</title>
        <authorList>
            <person name="Brueggemann H."/>
            <person name="Henne A."/>
            <person name="Hoster F."/>
            <person name="Liesegang H."/>
            <person name="Wiezer A."/>
            <person name="Strittmatter A."/>
            <person name="Hujer S."/>
            <person name="Duerre P."/>
            <person name="Gottschalk G."/>
        </authorList>
    </citation>
    <scope>NUCLEOTIDE SEQUENCE [LARGE SCALE GENOMIC DNA]</scope>
    <source>
        <strain>DSM 16379 / KPA171202</strain>
    </source>
</reference>
<feature type="chain" id="PRO_0000307530" description="Triosephosphate isomerase">
    <location>
        <begin position="1"/>
        <end position="259"/>
    </location>
</feature>
<feature type="active site" description="Electrophile" evidence="1">
    <location>
        <position position="102"/>
    </location>
</feature>
<feature type="active site" description="Proton acceptor" evidence="1">
    <location>
        <position position="174"/>
    </location>
</feature>
<feature type="binding site" evidence="1">
    <location>
        <begin position="10"/>
        <end position="12"/>
    </location>
    <ligand>
        <name>substrate</name>
    </ligand>
</feature>
<feature type="binding site" evidence="1">
    <location>
        <position position="180"/>
    </location>
    <ligand>
        <name>substrate</name>
    </ligand>
</feature>
<feature type="binding site" evidence="1">
    <location>
        <position position="220"/>
    </location>
    <ligand>
        <name>substrate</name>
    </ligand>
</feature>
<feature type="binding site" evidence="1">
    <location>
        <begin position="241"/>
        <end position="242"/>
    </location>
    <ligand>
        <name>substrate</name>
    </ligand>
</feature>
<dbReference type="EC" id="5.3.1.1" evidence="1"/>
<dbReference type="EMBL" id="AE017283">
    <property type="protein sequence ID" value="AAT82574.1"/>
    <property type="molecule type" value="Genomic_DNA"/>
</dbReference>
<dbReference type="RefSeq" id="WP_002513869.1">
    <property type="nucleotide sequence ID" value="NZ_CP025935.1"/>
</dbReference>
<dbReference type="SMR" id="Q6A9J2"/>
<dbReference type="EnsemblBacteria" id="AAT82574">
    <property type="protein sequence ID" value="AAT82574"/>
    <property type="gene ID" value="PPA0818"/>
</dbReference>
<dbReference type="KEGG" id="pac:PPA0818"/>
<dbReference type="eggNOG" id="COG0149">
    <property type="taxonomic scope" value="Bacteria"/>
</dbReference>
<dbReference type="HOGENOM" id="CLU_024251_2_3_11"/>
<dbReference type="UniPathway" id="UPA00109">
    <property type="reaction ID" value="UER00189"/>
</dbReference>
<dbReference type="UniPathway" id="UPA00138"/>
<dbReference type="Proteomes" id="UP000000603">
    <property type="component" value="Chromosome"/>
</dbReference>
<dbReference type="GO" id="GO:0005829">
    <property type="term" value="C:cytosol"/>
    <property type="evidence" value="ECO:0007669"/>
    <property type="project" value="TreeGrafter"/>
</dbReference>
<dbReference type="GO" id="GO:0004807">
    <property type="term" value="F:triose-phosphate isomerase activity"/>
    <property type="evidence" value="ECO:0007669"/>
    <property type="project" value="UniProtKB-UniRule"/>
</dbReference>
<dbReference type="GO" id="GO:0006094">
    <property type="term" value="P:gluconeogenesis"/>
    <property type="evidence" value="ECO:0007669"/>
    <property type="project" value="UniProtKB-UniRule"/>
</dbReference>
<dbReference type="GO" id="GO:0046166">
    <property type="term" value="P:glyceraldehyde-3-phosphate biosynthetic process"/>
    <property type="evidence" value="ECO:0007669"/>
    <property type="project" value="TreeGrafter"/>
</dbReference>
<dbReference type="GO" id="GO:0019563">
    <property type="term" value="P:glycerol catabolic process"/>
    <property type="evidence" value="ECO:0007669"/>
    <property type="project" value="TreeGrafter"/>
</dbReference>
<dbReference type="GO" id="GO:0006096">
    <property type="term" value="P:glycolytic process"/>
    <property type="evidence" value="ECO:0007669"/>
    <property type="project" value="UniProtKB-UniRule"/>
</dbReference>
<dbReference type="CDD" id="cd00311">
    <property type="entry name" value="TIM"/>
    <property type="match status" value="1"/>
</dbReference>
<dbReference type="FunFam" id="3.20.20.70:FF:000020">
    <property type="entry name" value="Triosephosphate isomerase"/>
    <property type="match status" value="1"/>
</dbReference>
<dbReference type="Gene3D" id="3.20.20.70">
    <property type="entry name" value="Aldolase class I"/>
    <property type="match status" value="1"/>
</dbReference>
<dbReference type="HAMAP" id="MF_00147_B">
    <property type="entry name" value="TIM_B"/>
    <property type="match status" value="1"/>
</dbReference>
<dbReference type="InterPro" id="IPR013785">
    <property type="entry name" value="Aldolase_TIM"/>
</dbReference>
<dbReference type="InterPro" id="IPR035990">
    <property type="entry name" value="TIM_sf"/>
</dbReference>
<dbReference type="InterPro" id="IPR022896">
    <property type="entry name" value="TrioseP_Isoase_bac/euk"/>
</dbReference>
<dbReference type="InterPro" id="IPR000652">
    <property type="entry name" value="Triosephosphate_isomerase"/>
</dbReference>
<dbReference type="InterPro" id="IPR020861">
    <property type="entry name" value="Triosephosphate_isomerase_AS"/>
</dbReference>
<dbReference type="NCBIfam" id="TIGR00419">
    <property type="entry name" value="tim"/>
    <property type="match status" value="1"/>
</dbReference>
<dbReference type="PANTHER" id="PTHR21139">
    <property type="entry name" value="TRIOSEPHOSPHATE ISOMERASE"/>
    <property type="match status" value="1"/>
</dbReference>
<dbReference type="PANTHER" id="PTHR21139:SF42">
    <property type="entry name" value="TRIOSEPHOSPHATE ISOMERASE"/>
    <property type="match status" value="1"/>
</dbReference>
<dbReference type="Pfam" id="PF00121">
    <property type="entry name" value="TIM"/>
    <property type="match status" value="1"/>
</dbReference>
<dbReference type="SUPFAM" id="SSF51351">
    <property type="entry name" value="Triosephosphate isomerase (TIM)"/>
    <property type="match status" value="1"/>
</dbReference>
<dbReference type="PROSITE" id="PS00171">
    <property type="entry name" value="TIM_1"/>
    <property type="match status" value="1"/>
</dbReference>
<dbReference type="PROSITE" id="PS51440">
    <property type="entry name" value="TIM_2"/>
    <property type="match status" value="1"/>
</dbReference>
<accession>Q6A9J2</accession>
<organism>
    <name type="scientific">Cutibacterium acnes (strain DSM 16379 / KPA171202)</name>
    <name type="common">Propionibacterium acnes</name>
    <dbReference type="NCBI Taxonomy" id="267747"/>
    <lineage>
        <taxon>Bacteria</taxon>
        <taxon>Bacillati</taxon>
        <taxon>Actinomycetota</taxon>
        <taxon>Actinomycetes</taxon>
        <taxon>Propionibacteriales</taxon>
        <taxon>Propionibacteriaceae</taxon>
        <taxon>Cutibacterium</taxon>
    </lineage>
</organism>
<comment type="function">
    <text evidence="1">Involved in the gluconeogenesis. Catalyzes stereospecifically the conversion of dihydroxyacetone phosphate (DHAP) to D-glyceraldehyde-3-phosphate (G3P).</text>
</comment>
<comment type="catalytic activity">
    <reaction evidence="1">
        <text>D-glyceraldehyde 3-phosphate = dihydroxyacetone phosphate</text>
        <dbReference type="Rhea" id="RHEA:18585"/>
        <dbReference type="ChEBI" id="CHEBI:57642"/>
        <dbReference type="ChEBI" id="CHEBI:59776"/>
        <dbReference type="EC" id="5.3.1.1"/>
    </reaction>
</comment>
<comment type="pathway">
    <text evidence="1">Carbohydrate biosynthesis; gluconeogenesis.</text>
</comment>
<comment type="pathway">
    <text evidence="1">Carbohydrate degradation; glycolysis; D-glyceraldehyde 3-phosphate from glycerone phosphate: step 1/1.</text>
</comment>
<comment type="subunit">
    <text evidence="1">Homodimer.</text>
</comment>
<comment type="subcellular location">
    <subcellularLocation>
        <location evidence="1">Cytoplasm</location>
    </subcellularLocation>
</comment>
<comment type="similarity">
    <text evidence="1">Belongs to the triosephosphate isomerase family.</text>
</comment>
<name>TPIS_CUTAK</name>
<proteinExistence type="inferred from homology"/>
<sequence>MSRTPIMAGNWKMNLDHVAATSLVQDLGEALKAAGYDSSKSEAVVIPPFTDIRPVAIIIDGDKLPIAYGAQDISAHDDGAYTGEVSGAMLSKLGCRYVVVGHSERREYHNESDELVNAKAKKVIENGMTPIICCGEALEVRKAGKHVEHTVGQIKADLDGIPAEQVAKLVIAYEPIWAIGTGETATADDAQEVCQAIREAVKELYDAPTAEAVRIQYGGSVKPANVAEIMAKPDVDGALVGGASLKAGDFSKIVTFYEA</sequence>